<sequence>MLTLDTLNVMLAVSEEGLIEEMIIALLASPQLAVFFEKFPRLKAAITDDVPRWREALRSRLKDARVPPELTEEVMCYQQSQLLSTPQFIVQLPQILDLLHRLNSPWAEQARQLVDANSTITSALHTLFLQRWRLSLIVQATTLNQQLLEEEREQLLSEVQERMTLSGQLEPILADNNTAAGRLWDMSAGQLKRGDYQLIVKYGEFLNEQPELKRLAEQLGRSREAKSIPRNDAQMEAFRTMVREPATVPEQVDGLQQSDDILRLLPPELATLGITELEYEFYRRLVEKQLLTYRLHGESWREKVIERPVVHKDYDEQPRGPFIVCVDTSGSMGGFNEQCAKAFCLALMRIALAENRRCYIMLFSTEIVRYELSGPQGIEQAIRFLSQQFRGGTDLASCFRAIMERLQSREWFDADAVVISDFIAQRLPDDVTSKVKELQRVHQHRFHAVAMSAHGKPGIMRIFDHIWRFDTGMRSRLLRRWRR</sequence>
<comment type="function">
    <text evidence="1">Component of the RavA-ViaA chaperone complex, which may act on the membrane to optimize the function of some of the respiratory chains. ViaA stimulates the ATPase activity of RavA.</text>
</comment>
<comment type="subunit">
    <text evidence="1">Homodimer. Interacts with RavA.</text>
</comment>
<comment type="subcellular location">
    <subcellularLocation>
        <location evidence="1">Cytoplasm</location>
    </subcellularLocation>
</comment>
<comment type="similarity">
    <text evidence="1">Belongs to the ViaA family.</text>
</comment>
<feature type="chain" id="PRO_1000069605" description="Regulatory protein ViaA">
    <location>
        <begin position="1"/>
        <end position="483"/>
    </location>
</feature>
<evidence type="ECO:0000255" key="1">
    <source>
        <dbReference type="HAMAP-Rule" id="MF_01626"/>
    </source>
</evidence>
<organism>
    <name type="scientific">Escherichia coli O139:H28 (strain E24377A / ETEC)</name>
    <dbReference type="NCBI Taxonomy" id="331111"/>
    <lineage>
        <taxon>Bacteria</taxon>
        <taxon>Pseudomonadati</taxon>
        <taxon>Pseudomonadota</taxon>
        <taxon>Gammaproteobacteria</taxon>
        <taxon>Enterobacterales</taxon>
        <taxon>Enterobacteriaceae</taxon>
        <taxon>Escherichia</taxon>
    </lineage>
</organism>
<gene>
    <name evidence="1" type="primary">viaA</name>
    <name type="ordered locus">EcE24377A_4261</name>
</gene>
<name>VIAA_ECO24</name>
<proteinExistence type="inferred from homology"/>
<reference key="1">
    <citation type="journal article" date="2008" name="J. Bacteriol.">
        <title>The pangenome structure of Escherichia coli: comparative genomic analysis of E. coli commensal and pathogenic isolates.</title>
        <authorList>
            <person name="Rasko D.A."/>
            <person name="Rosovitz M.J."/>
            <person name="Myers G.S.A."/>
            <person name="Mongodin E.F."/>
            <person name="Fricke W.F."/>
            <person name="Gajer P."/>
            <person name="Crabtree J."/>
            <person name="Sebaihia M."/>
            <person name="Thomson N.R."/>
            <person name="Chaudhuri R."/>
            <person name="Henderson I.R."/>
            <person name="Sperandio V."/>
            <person name="Ravel J."/>
        </authorList>
    </citation>
    <scope>NUCLEOTIDE SEQUENCE [LARGE SCALE GENOMIC DNA]</scope>
    <source>
        <strain>E24377A / ETEC</strain>
    </source>
</reference>
<accession>A7ZTV6</accession>
<dbReference type="EMBL" id="CP000800">
    <property type="protein sequence ID" value="ABV19805.1"/>
    <property type="molecule type" value="Genomic_DNA"/>
</dbReference>
<dbReference type="RefSeq" id="WP_000956630.1">
    <property type="nucleotide sequence ID" value="NC_009801.1"/>
</dbReference>
<dbReference type="SMR" id="A7ZTV6"/>
<dbReference type="GeneID" id="75205463"/>
<dbReference type="KEGG" id="ecw:EcE24377A_4261"/>
<dbReference type="HOGENOM" id="CLU_022130_0_0_6"/>
<dbReference type="Proteomes" id="UP000001122">
    <property type="component" value="Chromosome"/>
</dbReference>
<dbReference type="GO" id="GO:0005829">
    <property type="term" value="C:cytosol"/>
    <property type="evidence" value="ECO:0007669"/>
    <property type="project" value="TreeGrafter"/>
</dbReference>
<dbReference type="CDD" id="cd01462">
    <property type="entry name" value="VWA_YIEM_type"/>
    <property type="match status" value="1"/>
</dbReference>
<dbReference type="Gene3D" id="3.40.50.410">
    <property type="entry name" value="von Willebrand factor, type A domain"/>
    <property type="match status" value="1"/>
</dbReference>
<dbReference type="HAMAP" id="MF_01626">
    <property type="entry name" value="ViaA"/>
    <property type="match status" value="1"/>
</dbReference>
<dbReference type="InterPro" id="IPR008912">
    <property type="entry name" value="Uncharacterised_CoxE"/>
</dbReference>
<dbReference type="InterPro" id="IPR023481">
    <property type="entry name" value="Uncharacterised_ViaA"/>
</dbReference>
<dbReference type="InterPro" id="IPR002035">
    <property type="entry name" value="VWF_A"/>
</dbReference>
<dbReference type="InterPro" id="IPR036465">
    <property type="entry name" value="vWFA_dom_sf"/>
</dbReference>
<dbReference type="NCBIfam" id="NF008230">
    <property type="entry name" value="PRK10997.1"/>
    <property type="match status" value="1"/>
</dbReference>
<dbReference type="PANTHER" id="PTHR36846">
    <property type="entry name" value="PROTEIN VIAA"/>
    <property type="match status" value="1"/>
</dbReference>
<dbReference type="PANTHER" id="PTHR36846:SF1">
    <property type="entry name" value="PROTEIN VIAA"/>
    <property type="match status" value="1"/>
</dbReference>
<dbReference type="Pfam" id="PF05762">
    <property type="entry name" value="VWA_CoxE"/>
    <property type="match status" value="1"/>
</dbReference>
<dbReference type="SMART" id="SM00327">
    <property type="entry name" value="VWA"/>
    <property type="match status" value="1"/>
</dbReference>
<dbReference type="SUPFAM" id="SSF53300">
    <property type="entry name" value="vWA-like"/>
    <property type="match status" value="1"/>
</dbReference>
<protein>
    <recommendedName>
        <fullName evidence="1">Regulatory protein ViaA</fullName>
    </recommendedName>
    <alternativeName>
        <fullName evidence="1">VWA interacting with AAA+ ATPase</fullName>
    </alternativeName>
</protein>
<keyword id="KW-0143">Chaperone</keyword>
<keyword id="KW-0963">Cytoplasm</keyword>
<keyword id="KW-1185">Reference proteome</keyword>